<reference key="1">
    <citation type="journal article" date="2009" name="PLoS Genet.">
        <title>Organised genome dynamics in the Escherichia coli species results in highly diverse adaptive paths.</title>
        <authorList>
            <person name="Touchon M."/>
            <person name="Hoede C."/>
            <person name="Tenaillon O."/>
            <person name="Barbe V."/>
            <person name="Baeriswyl S."/>
            <person name="Bidet P."/>
            <person name="Bingen E."/>
            <person name="Bonacorsi S."/>
            <person name="Bouchier C."/>
            <person name="Bouvet O."/>
            <person name="Calteau A."/>
            <person name="Chiapello H."/>
            <person name="Clermont O."/>
            <person name="Cruveiller S."/>
            <person name="Danchin A."/>
            <person name="Diard M."/>
            <person name="Dossat C."/>
            <person name="Karoui M.E."/>
            <person name="Frapy E."/>
            <person name="Garry L."/>
            <person name="Ghigo J.M."/>
            <person name="Gilles A.M."/>
            <person name="Johnson J."/>
            <person name="Le Bouguenec C."/>
            <person name="Lescat M."/>
            <person name="Mangenot S."/>
            <person name="Martinez-Jehanne V."/>
            <person name="Matic I."/>
            <person name="Nassif X."/>
            <person name="Oztas S."/>
            <person name="Petit M.A."/>
            <person name="Pichon C."/>
            <person name="Rouy Z."/>
            <person name="Ruf C.S."/>
            <person name="Schneider D."/>
            <person name="Tourret J."/>
            <person name="Vacherie B."/>
            <person name="Vallenet D."/>
            <person name="Medigue C."/>
            <person name="Rocha E.P.C."/>
            <person name="Denamur E."/>
        </authorList>
    </citation>
    <scope>NUCLEOTIDE SEQUENCE [LARGE SCALE GENOMIC DNA]</scope>
    <source>
        <strain>S88 / ExPEC</strain>
    </source>
</reference>
<evidence type="ECO:0000255" key="1">
    <source>
        <dbReference type="HAMAP-Rule" id="MF_00473"/>
    </source>
</evidence>
<sequence length="549" mass="61544">MKNINPTQTAAWQALQKHFDEMKDVTIADLFAKDGDRFSKFSATFDDQMLVDYSKNRITEETLAKLQDLAKECDLAGAIKSMFSGEKINRTENRAVLHVALRNRSNTPILVDGKDVMPEVNAVLEKMKTFSEAIISGEWKGYTGKAITDVVNIGIGGSDLGPYMVTEALRPYKNHLNMHFVSNVDGTHIAEVLKKVNPETTLFLVASKTFTTQETMTNAHSARDWFLKAAGDEKHVAKHFAALSTNAKAVGEFGIDTANMFEFWDWVGGRYSLWSAIGLSIVLSIGFDNFVELLSGAHAMDKHFSTTPAEKNLPVLLALIGIWYNNFFGAETEAILPYDQYMHRFAAYFQQGNMESNGKYVDRNGKVVDYQTGPIIWGEPGTNGQHAFYQLIHQGTKMVPCDFIAPAITHNPLSDHHQKLLSNFFAQTEALAFGKSREVVEQEYRDQGKDPATLDYVVPFKVFEGNRPTNSILLREITPFSLGALIALYEHKIFTQGVILNIFTFDQWGVELGKQLANRILPELKDDKEISSHDSSTNGLINRYKAWRG</sequence>
<accession>B7MJ15</accession>
<protein>
    <recommendedName>
        <fullName evidence="1">Glucose-6-phosphate isomerase</fullName>
        <shortName evidence="1">GPI</shortName>
        <ecNumber evidence="1">5.3.1.9</ecNumber>
    </recommendedName>
    <alternativeName>
        <fullName evidence="1">Phosphoglucose isomerase</fullName>
        <shortName evidence="1">PGI</shortName>
    </alternativeName>
    <alternativeName>
        <fullName evidence="1">Phosphohexose isomerase</fullName>
        <shortName evidence="1">PHI</shortName>
    </alternativeName>
</protein>
<gene>
    <name evidence="1" type="primary">pgi</name>
    <name type="ordered locus">ECS88_4498</name>
</gene>
<name>G6PI_ECO45</name>
<feature type="chain" id="PRO_1000125716" description="Glucose-6-phosphate isomerase">
    <location>
        <begin position="1"/>
        <end position="549"/>
    </location>
</feature>
<feature type="active site" description="Proton donor" evidence="1">
    <location>
        <position position="355"/>
    </location>
</feature>
<feature type="active site" evidence="1">
    <location>
        <position position="386"/>
    </location>
</feature>
<feature type="active site" evidence="1">
    <location>
        <position position="514"/>
    </location>
</feature>
<feature type="modified residue" description="N6-acetyllysine" evidence="1">
    <location>
        <position position="80"/>
    </location>
</feature>
<feature type="modified residue" description="N6-acetyllysine" evidence="1">
    <location>
        <position position="228"/>
    </location>
</feature>
<feature type="modified residue" description="N6-acetyllysine" evidence="1">
    <location>
        <position position="234"/>
    </location>
</feature>
<proteinExistence type="inferred from homology"/>
<dbReference type="EC" id="5.3.1.9" evidence="1"/>
<dbReference type="EMBL" id="CU928161">
    <property type="protein sequence ID" value="CAR05659.1"/>
    <property type="molecule type" value="Genomic_DNA"/>
</dbReference>
<dbReference type="RefSeq" id="WP_000789981.1">
    <property type="nucleotide sequence ID" value="NC_011742.1"/>
</dbReference>
<dbReference type="SMR" id="B7MJ15"/>
<dbReference type="KEGG" id="ecz:ECS88_4498"/>
<dbReference type="HOGENOM" id="CLU_017947_3_1_6"/>
<dbReference type="UniPathway" id="UPA00109">
    <property type="reaction ID" value="UER00181"/>
</dbReference>
<dbReference type="UniPathway" id="UPA00138"/>
<dbReference type="Proteomes" id="UP000000747">
    <property type="component" value="Chromosome"/>
</dbReference>
<dbReference type="GO" id="GO:0005829">
    <property type="term" value="C:cytosol"/>
    <property type="evidence" value="ECO:0007669"/>
    <property type="project" value="TreeGrafter"/>
</dbReference>
<dbReference type="GO" id="GO:0097367">
    <property type="term" value="F:carbohydrate derivative binding"/>
    <property type="evidence" value="ECO:0007669"/>
    <property type="project" value="InterPro"/>
</dbReference>
<dbReference type="GO" id="GO:0004347">
    <property type="term" value="F:glucose-6-phosphate isomerase activity"/>
    <property type="evidence" value="ECO:0007669"/>
    <property type="project" value="UniProtKB-UniRule"/>
</dbReference>
<dbReference type="GO" id="GO:0048029">
    <property type="term" value="F:monosaccharide binding"/>
    <property type="evidence" value="ECO:0007669"/>
    <property type="project" value="TreeGrafter"/>
</dbReference>
<dbReference type="GO" id="GO:0006094">
    <property type="term" value="P:gluconeogenesis"/>
    <property type="evidence" value="ECO:0007669"/>
    <property type="project" value="UniProtKB-UniRule"/>
</dbReference>
<dbReference type="GO" id="GO:0051156">
    <property type="term" value="P:glucose 6-phosphate metabolic process"/>
    <property type="evidence" value="ECO:0007669"/>
    <property type="project" value="TreeGrafter"/>
</dbReference>
<dbReference type="GO" id="GO:0006096">
    <property type="term" value="P:glycolytic process"/>
    <property type="evidence" value="ECO:0007669"/>
    <property type="project" value="UniProtKB-UniRule"/>
</dbReference>
<dbReference type="CDD" id="cd05015">
    <property type="entry name" value="SIS_PGI_1"/>
    <property type="match status" value="1"/>
</dbReference>
<dbReference type="CDD" id="cd05016">
    <property type="entry name" value="SIS_PGI_2"/>
    <property type="match status" value="1"/>
</dbReference>
<dbReference type="FunFam" id="1.10.1390.10:FF:000001">
    <property type="entry name" value="Glucose-6-phosphate isomerase"/>
    <property type="match status" value="1"/>
</dbReference>
<dbReference type="FunFam" id="3.40.50.10490:FF:000004">
    <property type="entry name" value="Glucose-6-phosphate isomerase"/>
    <property type="match status" value="1"/>
</dbReference>
<dbReference type="Gene3D" id="1.10.1390.10">
    <property type="match status" value="1"/>
</dbReference>
<dbReference type="Gene3D" id="3.40.50.10490">
    <property type="entry name" value="Glucose-6-phosphate isomerase like protein, domain 1"/>
    <property type="match status" value="2"/>
</dbReference>
<dbReference type="HAMAP" id="MF_00473">
    <property type="entry name" value="G6P_isomerase"/>
    <property type="match status" value="1"/>
</dbReference>
<dbReference type="InterPro" id="IPR001672">
    <property type="entry name" value="G6P_Isomerase"/>
</dbReference>
<dbReference type="InterPro" id="IPR023096">
    <property type="entry name" value="G6P_Isomerase_C"/>
</dbReference>
<dbReference type="InterPro" id="IPR018189">
    <property type="entry name" value="Phosphoglucose_isomerase_CS"/>
</dbReference>
<dbReference type="InterPro" id="IPR046348">
    <property type="entry name" value="SIS_dom_sf"/>
</dbReference>
<dbReference type="InterPro" id="IPR035476">
    <property type="entry name" value="SIS_PGI_1"/>
</dbReference>
<dbReference type="InterPro" id="IPR035482">
    <property type="entry name" value="SIS_PGI_2"/>
</dbReference>
<dbReference type="NCBIfam" id="NF001211">
    <property type="entry name" value="PRK00179.1"/>
    <property type="match status" value="1"/>
</dbReference>
<dbReference type="PANTHER" id="PTHR11469">
    <property type="entry name" value="GLUCOSE-6-PHOSPHATE ISOMERASE"/>
    <property type="match status" value="1"/>
</dbReference>
<dbReference type="PANTHER" id="PTHR11469:SF1">
    <property type="entry name" value="GLUCOSE-6-PHOSPHATE ISOMERASE"/>
    <property type="match status" value="1"/>
</dbReference>
<dbReference type="Pfam" id="PF00342">
    <property type="entry name" value="PGI"/>
    <property type="match status" value="1"/>
</dbReference>
<dbReference type="PRINTS" id="PR00662">
    <property type="entry name" value="G6PISOMERASE"/>
</dbReference>
<dbReference type="SUPFAM" id="SSF53697">
    <property type="entry name" value="SIS domain"/>
    <property type="match status" value="1"/>
</dbReference>
<dbReference type="PROSITE" id="PS00765">
    <property type="entry name" value="P_GLUCOSE_ISOMERASE_1"/>
    <property type="match status" value="1"/>
</dbReference>
<dbReference type="PROSITE" id="PS00174">
    <property type="entry name" value="P_GLUCOSE_ISOMERASE_2"/>
    <property type="match status" value="1"/>
</dbReference>
<dbReference type="PROSITE" id="PS51463">
    <property type="entry name" value="P_GLUCOSE_ISOMERASE_3"/>
    <property type="match status" value="1"/>
</dbReference>
<keyword id="KW-0007">Acetylation</keyword>
<keyword id="KW-0963">Cytoplasm</keyword>
<keyword id="KW-0312">Gluconeogenesis</keyword>
<keyword id="KW-0324">Glycolysis</keyword>
<keyword id="KW-0413">Isomerase</keyword>
<keyword id="KW-1185">Reference proteome</keyword>
<organism>
    <name type="scientific">Escherichia coli O45:K1 (strain S88 / ExPEC)</name>
    <dbReference type="NCBI Taxonomy" id="585035"/>
    <lineage>
        <taxon>Bacteria</taxon>
        <taxon>Pseudomonadati</taxon>
        <taxon>Pseudomonadota</taxon>
        <taxon>Gammaproteobacteria</taxon>
        <taxon>Enterobacterales</taxon>
        <taxon>Enterobacteriaceae</taxon>
        <taxon>Escherichia</taxon>
    </lineage>
</organism>
<comment type="function">
    <text evidence="1">Catalyzes the reversible isomerization of glucose-6-phosphate to fructose-6-phosphate.</text>
</comment>
<comment type="catalytic activity">
    <reaction evidence="1">
        <text>alpha-D-glucose 6-phosphate = beta-D-fructose 6-phosphate</text>
        <dbReference type="Rhea" id="RHEA:11816"/>
        <dbReference type="ChEBI" id="CHEBI:57634"/>
        <dbReference type="ChEBI" id="CHEBI:58225"/>
        <dbReference type="EC" id="5.3.1.9"/>
    </reaction>
</comment>
<comment type="pathway">
    <text evidence="1">Carbohydrate biosynthesis; gluconeogenesis.</text>
</comment>
<comment type="pathway">
    <text evidence="1">Carbohydrate degradation; glycolysis; D-glyceraldehyde 3-phosphate and glycerone phosphate from D-glucose: step 2/4.</text>
</comment>
<comment type="subcellular location">
    <subcellularLocation>
        <location evidence="1">Cytoplasm</location>
    </subcellularLocation>
</comment>
<comment type="similarity">
    <text evidence="1">Belongs to the GPI family.</text>
</comment>